<keyword id="KW-0167">Capsid protein</keyword>
<keyword id="KW-0238">DNA-binding</keyword>
<keyword id="KW-1048">Host nucleus</keyword>
<keyword id="KW-0479">Metal-binding</keyword>
<keyword id="KW-1185">Reference proteome</keyword>
<keyword id="KW-1140">T=1 icosahedral capsid protein</keyword>
<keyword id="KW-1163">Viral penetration into host nucleus</keyword>
<keyword id="KW-0946">Virion</keyword>
<keyword id="KW-1160">Virus entry into host cell</keyword>
<keyword id="KW-0862">Zinc</keyword>
<keyword id="KW-0863">Zinc-finger</keyword>
<accession>P36278</accession>
<evidence type="ECO:0000250" key="1"/>
<evidence type="ECO:0000255" key="2"/>
<evidence type="ECO:0000305" key="3"/>
<comment type="function">
    <text evidence="1">Encapsidates the viral genome into characteristic twinned ('geminate') particles. Binds the genomic viral ssDNA and shuttles it into and out of the cell nucleus. Plays a role in protection of the genome from degradation, virus acquisition and transmission by insect vectors, infectivity, and systemic movement. The CP of monopartite geminiviruses is absolutely essential for virus movement (By similarity).</text>
</comment>
<comment type="subunit">
    <text evidence="1">Homomultimer. Binds to single-stranded and double-stranded viral DNA. Interacts (via nuclear localization signals) with host importin alpha-1a (By similarity).</text>
</comment>
<comment type="subcellular location">
    <subcellularLocation>
        <location evidence="3">Virion</location>
    </subcellularLocation>
    <subcellularLocation>
        <location evidence="1">Host nucleus</location>
    </subcellularLocation>
    <text evidence="1">It is actively transported into the host cell nucleus. It may be exported out of the nucleus through a nuclear export signal for cell-to-cell movement and spread (By similarity).</text>
</comment>
<comment type="similarity">
    <text evidence="3">Belongs to the geminiviridae capsid protein family.</text>
</comment>
<protein>
    <recommendedName>
        <fullName>Capsid protein</fullName>
    </recommendedName>
    <alternativeName>
        <fullName>Coat protein</fullName>
        <shortName>CP</shortName>
    </alternativeName>
</protein>
<feature type="chain" id="PRO_0000222196" description="Capsid protein">
    <location>
        <begin position="1"/>
        <end position="256"/>
    </location>
</feature>
<feature type="zinc finger region" evidence="2">
    <location>
        <begin position="68"/>
        <end position="85"/>
    </location>
</feature>
<feature type="short sequence motif" description="Bipartite nuclear localization signal" evidence="2">
    <location>
        <begin position="3"/>
        <end position="20"/>
    </location>
</feature>
<feature type="short sequence motif" description="Nuclear localization signal" evidence="2">
    <location>
        <begin position="40"/>
        <end position="54"/>
    </location>
</feature>
<feature type="short sequence motif" description="Nuclear export signal" evidence="2">
    <location>
        <begin position="101"/>
        <end position="122"/>
    </location>
</feature>
<feature type="short sequence motif" description="Bipartite nuclear localization signal" evidence="2">
    <location>
        <begin position="200"/>
        <end position="247"/>
    </location>
</feature>
<gene>
    <name type="ORF">V1</name>
</gene>
<sequence>MSKRPADIVISTPASKVRRKLNFNSPFKSAAAVPTVRVTRRRTWVNRPMYRKPMMYRLFRSPDVPRGCEGPCKVQSYEQRHDVAHVGKVLCVSDVTRGTGITHRTGKRFCIKSIYVLGKIWMDDNIKTRNHTNTVMFFLVRDRRPYGTPKDFGQVFNMYDNEPSTATVKNDMRDGFQVIKKWSATVTGGQYASKEQAIINRFYKIYNHCTYNHQEAAKYENHTENALLLYMACTHASNPVYATLKIRIYFYDSIQN</sequence>
<name>CAPSD_TLCVA</name>
<organism>
    <name type="scientific">Tomato leaf curl virus (strain Australia)</name>
    <name type="common">ToLCV</name>
    <dbReference type="NCBI Taxonomy" id="223353"/>
    <lineage>
        <taxon>Viruses</taxon>
        <taxon>Monodnaviria</taxon>
        <taxon>Shotokuvirae</taxon>
        <taxon>Cressdnaviricota</taxon>
        <taxon>Repensiviricetes</taxon>
        <taxon>Geplafuvirales</taxon>
        <taxon>Geminiviridae</taxon>
        <taxon>Begomovirus</taxon>
        <taxon>Tomato leaf curl virus</taxon>
    </lineage>
</organism>
<reference key="1">
    <citation type="journal article" date="1993" name="J. Gen. Virol.">
        <title>Nucleotide sequence and genome organization of tomato leaf curl geminivirus.</title>
        <authorList>
            <person name="Dry I.B."/>
            <person name="Rigden J.E."/>
            <person name="Krake L.R."/>
            <person name="Mullineaux P.M."/>
            <person name="Rezaian M.A."/>
        </authorList>
    </citation>
    <scope>NUCLEOTIDE SEQUENCE [GENOMIC DNA]</scope>
</reference>
<proteinExistence type="inferred from homology"/>
<dbReference type="EMBL" id="S53251">
    <property type="protein sequence ID" value="AAM33778.1"/>
    <property type="molecule type" value="Genomic_DNA"/>
</dbReference>
<dbReference type="PIR" id="JQ1886">
    <property type="entry name" value="JQ1886"/>
</dbReference>
<dbReference type="SMR" id="P36278"/>
<dbReference type="KEGG" id="vg:944501"/>
<dbReference type="Proteomes" id="UP000008246">
    <property type="component" value="Genome"/>
</dbReference>
<dbReference type="GO" id="GO:0043657">
    <property type="term" value="C:host cell"/>
    <property type="evidence" value="ECO:0007669"/>
    <property type="project" value="GOC"/>
</dbReference>
<dbReference type="GO" id="GO:0042025">
    <property type="term" value="C:host cell nucleus"/>
    <property type="evidence" value="ECO:0007669"/>
    <property type="project" value="UniProtKB-SubCell"/>
</dbReference>
<dbReference type="GO" id="GO:0039615">
    <property type="term" value="C:T=1 icosahedral viral capsid"/>
    <property type="evidence" value="ECO:0007669"/>
    <property type="project" value="UniProtKB-KW"/>
</dbReference>
<dbReference type="GO" id="GO:0003677">
    <property type="term" value="F:DNA binding"/>
    <property type="evidence" value="ECO:0007669"/>
    <property type="project" value="UniProtKB-KW"/>
</dbReference>
<dbReference type="GO" id="GO:0005198">
    <property type="term" value="F:structural molecule activity"/>
    <property type="evidence" value="ECO:0007669"/>
    <property type="project" value="InterPro"/>
</dbReference>
<dbReference type="GO" id="GO:0008270">
    <property type="term" value="F:zinc ion binding"/>
    <property type="evidence" value="ECO:0007669"/>
    <property type="project" value="UniProtKB-KW"/>
</dbReference>
<dbReference type="GO" id="GO:0046718">
    <property type="term" value="P:symbiont entry into host cell"/>
    <property type="evidence" value="ECO:0007669"/>
    <property type="project" value="UniProtKB-KW"/>
</dbReference>
<dbReference type="GO" id="GO:0075732">
    <property type="term" value="P:viral penetration into host nucleus"/>
    <property type="evidence" value="ECO:0007669"/>
    <property type="project" value="UniProtKB-KW"/>
</dbReference>
<dbReference type="Gene3D" id="2.60.120.20">
    <property type="match status" value="1"/>
</dbReference>
<dbReference type="InterPro" id="IPR000650">
    <property type="entry name" value="Gem_coat_AR1"/>
</dbReference>
<dbReference type="InterPro" id="IPR000263">
    <property type="entry name" value="GV_A/BR1_coat"/>
</dbReference>
<dbReference type="InterPro" id="IPR029053">
    <property type="entry name" value="Viral_coat"/>
</dbReference>
<dbReference type="Pfam" id="PF00844">
    <property type="entry name" value="Gemini_coat"/>
    <property type="match status" value="1"/>
</dbReference>
<dbReference type="PRINTS" id="PR00224">
    <property type="entry name" value="GEMCOATAR1"/>
</dbReference>
<dbReference type="PRINTS" id="PR00223">
    <property type="entry name" value="GEMCOATARBR1"/>
</dbReference>
<organismHost>
    <name type="scientific">Cynanchum acutum</name>
    <dbReference type="NCBI Taxonomy" id="185024"/>
</organismHost>
<organismHost>
    <name type="scientific">Malva parviflora</name>
    <name type="common">Little mallow</name>
    <name type="synonym">Cheeseweed mallow</name>
    <dbReference type="NCBI Taxonomy" id="145753"/>
</organismHost>
<organismHost>
    <name type="scientific">Solanum lycopersicum</name>
    <name type="common">Tomato</name>
    <name type="synonym">Lycopersicon esculentum</name>
    <dbReference type="NCBI Taxonomy" id="4081"/>
</organismHost>